<gene>
    <name type="ordered locus">At1g49990</name>
    <name type="ORF">F2J10.12</name>
</gene>
<feature type="chain" id="PRO_0000283325" description="F-box protein At1g49990">
    <location>
        <begin position="1"/>
        <end position="430"/>
    </location>
</feature>
<feature type="domain" description="F-box">
    <location>
        <begin position="1"/>
        <end position="45"/>
    </location>
</feature>
<organism>
    <name type="scientific">Arabidopsis thaliana</name>
    <name type="common">Mouse-ear cress</name>
    <dbReference type="NCBI Taxonomy" id="3702"/>
    <lineage>
        <taxon>Eukaryota</taxon>
        <taxon>Viridiplantae</taxon>
        <taxon>Streptophyta</taxon>
        <taxon>Embryophyta</taxon>
        <taxon>Tracheophyta</taxon>
        <taxon>Spermatophyta</taxon>
        <taxon>Magnoliopsida</taxon>
        <taxon>eudicotyledons</taxon>
        <taxon>Gunneridae</taxon>
        <taxon>Pentapetalae</taxon>
        <taxon>rosids</taxon>
        <taxon>malvids</taxon>
        <taxon>Brassicales</taxon>
        <taxon>Brassicaceae</taxon>
        <taxon>Camelineae</taxon>
        <taxon>Arabidopsis</taxon>
    </lineage>
</organism>
<reference key="1">
    <citation type="journal article" date="2000" name="Nature">
        <title>Sequence and analysis of chromosome 1 of the plant Arabidopsis thaliana.</title>
        <authorList>
            <person name="Theologis A."/>
            <person name="Ecker J.R."/>
            <person name="Palm C.J."/>
            <person name="Federspiel N.A."/>
            <person name="Kaul S."/>
            <person name="White O."/>
            <person name="Alonso J."/>
            <person name="Altafi H."/>
            <person name="Araujo R."/>
            <person name="Bowman C.L."/>
            <person name="Brooks S.Y."/>
            <person name="Buehler E."/>
            <person name="Chan A."/>
            <person name="Chao Q."/>
            <person name="Chen H."/>
            <person name="Cheuk R.F."/>
            <person name="Chin C.W."/>
            <person name="Chung M.K."/>
            <person name="Conn L."/>
            <person name="Conway A.B."/>
            <person name="Conway A.R."/>
            <person name="Creasy T.H."/>
            <person name="Dewar K."/>
            <person name="Dunn P."/>
            <person name="Etgu P."/>
            <person name="Feldblyum T.V."/>
            <person name="Feng J.-D."/>
            <person name="Fong B."/>
            <person name="Fujii C.Y."/>
            <person name="Gill J.E."/>
            <person name="Goldsmith A.D."/>
            <person name="Haas B."/>
            <person name="Hansen N.F."/>
            <person name="Hughes B."/>
            <person name="Huizar L."/>
            <person name="Hunter J.L."/>
            <person name="Jenkins J."/>
            <person name="Johnson-Hopson C."/>
            <person name="Khan S."/>
            <person name="Khaykin E."/>
            <person name="Kim C.J."/>
            <person name="Koo H.L."/>
            <person name="Kremenetskaia I."/>
            <person name="Kurtz D.B."/>
            <person name="Kwan A."/>
            <person name="Lam B."/>
            <person name="Langin-Hooper S."/>
            <person name="Lee A."/>
            <person name="Lee J.M."/>
            <person name="Lenz C.A."/>
            <person name="Li J.H."/>
            <person name="Li Y.-P."/>
            <person name="Lin X."/>
            <person name="Liu S.X."/>
            <person name="Liu Z.A."/>
            <person name="Luros J.S."/>
            <person name="Maiti R."/>
            <person name="Marziali A."/>
            <person name="Militscher J."/>
            <person name="Miranda M."/>
            <person name="Nguyen M."/>
            <person name="Nierman W.C."/>
            <person name="Osborne B.I."/>
            <person name="Pai G."/>
            <person name="Peterson J."/>
            <person name="Pham P.K."/>
            <person name="Rizzo M."/>
            <person name="Rooney T."/>
            <person name="Rowley D."/>
            <person name="Sakano H."/>
            <person name="Salzberg S.L."/>
            <person name="Schwartz J.R."/>
            <person name="Shinn P."/>
            <person name="Southwick A.M."/>
            <person name="Sun H."/>
            <person name="Tallon L.J."/>
            <person name="Tambunga G."/>
            <person name="Toriumi M.J."/>
            <person name="Town C.D."/>
            <person name="Utterback T."/>
            <person name="Van Aken S."/>
            <person name="Vaysberg M."/>
            <person name="Vysotskaia V.S."/>
            <person name="Walker M."/>
            <person name="Wu D."/>
            <person name="Yu G."/>
            <person name="Fraser C.M."/>
            <person name="Venter J.C."/>
            <person name="Davis R.W."/>
        </authorList>
    </citation>
    <scope>NUCLEOTIDE SEQUENCE [LARGE SCALE GENOMIC DNA]</scope>
    <source>
        <strain>cv. Columbia</strain>
    </source>
</reference>
<reference key="2">
    <citation type="journal article" date="2017" name="Plant J.">
        <title>Araport11: a complete reannotation of the Arabidopsis thaliana reference genome.</title>
        <authorList>
            <person name="Cheng C.Y."/>
            <person name="Krishnakumar V."/>
            <person name="Chan A.P."/>
            <person name="Thibaud-Nissen F."/>
            <person name="Schobel S."/>
            <person name="Town C.D."/>
        </authorList>
    </citation>
    <scope>GENOME REANNOTATION</scope>
    <source>
        <strain>cv. Columbia</strain>
    </source>
</reference>
<reference key="3">
    <citation type="submission" date="2004-08" db="EMBL/GenBank/DDBJ databases">
        <title>Reconstruction of cDNA sequences for hypothetical genes in Arabidopsis thaliana from 5' and 3' RACE products.</title>
        <authorList>
            <person name="Xiao Y.-L."/>
            <person name="Underwood B.A."/>
            <person name="Moskal W.A. Jr."/>
            <person name="Wang W."/>
            <person name="Redman J.C."/>
            <person name="Wu H.C."/>
            <person name="Utterback T."/>
            <person name="Town C.D."/>
        </authorList>
    </citation>
    <scope>NUCLEOTIDE SEQUENCE [LARGE SCALE MRNA]</scope>
    <source>
        <strain>cv. Columbia</strain>
    </source>
</reference>
<proteinExistence type="evidence at transcript level"/>
<dbReference type="EMBL" id="AC015445">
    <property type="protein sequence ID" value="AAF76445.1"/>
    <property type="molecule type" value="Genomic_DNA"/>
</dbReference>
<dbReference type="EMBL" id="CP002684">
    <property type="protein sequence ID" value="AEE32504.1"/>
    <property type="molecule type" value="Genomic_DNA"/>
</dbReference>
<dbReference type="EMBL" id="AY735533">
    <property type="protein sequence ID" value="AAU44403.1"/>
    <property type="molecule type" value="mRNA"/>
</dbReference>
<dbReference type="PIR" id="D96536">
    <property type="entry name" value="D96536"/>
</dbReference>
<dbReference type="RefSeq" id="NP_175421.2">
    <property type="nucleotide sequence ID" value="NM_103887.2"/>
</dbReference>
<dbReference type="FunCoup" id="Q9LPM2">
    <property type="interactions" value="171"/>
</dbReference>
<dbReference type="STRING" id="3702.Q9LPM2"/>
<dbReference type="PaxDb" id="3702-AT1G49990.1"/>
<dbReference type="ProteomicsDB" id="230071"/>
<dbReference type="EnsemblPlants" id="AT1G49990.1">
    <property type="protein sequence ID" value="AT1G49990.1"/>
    <property type="gene ID" value="AT1G49990"/>
</dbReference>
<dbReference type="GeneID" id="841423"/>
<dbReference type="Gramene" id="AT1G49990.1">
    <property type="protein sequence ID" value="AT1G49990.1"/>
    <property type="gene ID" value="AT1G49990"/>
</dbReference>
<dbReference type="KEGG" id="ath:AT1G49990"/>
<dbReference type="Araport" id="AT1G49990"/>
<dbReference type="TAIR" id="AT1G49990"/>
<dbReference type="HOGENOM" id="CLU_029240_0_0_1"/>
<dbReference type="InParanoid" id="Q9LPM2"/>
<dbReference type="OMA" id="FVLQRWM"/>
<dbReference type="PhylomeDB" id="Q9LPM2"/>
<dbReference type="PRO" id="PR:Q9LPM2"/>
<dbReference type="Proteomes" id="UP000006548">
    <property type="component" value="Chromosome 1"/>
</dbReference>
<dbReference type="ExpressionAtlas" id="Q9LPM2">
    <property type="expression patterns" value="baseline and differential"/>
</dbReference>
<dbReference type="CDD" id="cd22157">
    <property type="entry name" value="F-box_AtFBW1-like"/>
    <property type="match status" value="1"/>
</dbReference>
<dbReference type="Gene3D" id="1.20.1280.50">
    <property type="match status" value="1"/>
</dbReference>
<dbReference type="InterPro" id="IPR056592">
    <property type="entry name" value="At3g26010-like_b-prop"/>
</dbReference>
<dbReference type="InterPro" id="IPR036047">
    <property type="entry name" value="F-box-like_dom_sf"/>
</dbReference>
<dbReference type="InterPro" id="IPR001810">
    <property type="entry name" value="F-box_dom"/>
</dbReference>
<dbReference type="InterPro" id="IPR050796">
    <property type="entry name" value="SCF_F-box_component"/>
</dbReference>
<dbReference type="PANTHER" id="PTHR31672">
    <property type="entry name" value="BNACNNG10540D PROTEIN"/>
    <property type="match status" value="1"/>
</dbReference>
<dbReference type="Pfam" id="PF24750">
    <property type="entry name" value="b-prop_At3g26010-like"/>
    <property type="match status" value="1"/>
</dbReference>
<dbReference type="Pfam" id="PF00646">
    <property type="entry name" value="F-box"/>
    <property type="match status" value="1"/>
</dbReference>
<dbReference type="SUPFAM" id="SSF81383">
    <property type="entry name" value="F-box domain"/>
    <property type="match status" value="1"/>
</dbReference>
<accession>Q9LPM2</accession>
<keyword id="KW-1185">Reference proteome</keyword>
<protein>
    <recommendedName>
        <fullName>F-box protein At1g49990</fullName>
    </recommendedName>
</protein>
<name>FB51_ARATH</name>
<sequence>METGRRRTIPEVEILARLPLRSIARFKSVCKRWKSVIESDYFRRLFGSFHRSSSTSWSIMFRTEYLREMTQAIGFHGCKTWDLPKSLVSYIMPFQEYPNLPTSEYYYIASSNGLIWIDVLVSRIKNKVYSYKSFVGNPVLQEWVEIPQPPNPWVQDKHPWYPSPYSGVGMVTRVENGVVSSFKMVRTVQMELIDRRDEGMYLWRVCVYSSETGLWTFKQVFSSRPVHGGRVDSPVNLNGVLYMWDRYMFSNGPGVLVAHDFYGADDQCQVIPLPGANDEHEHEHDDEHEHVRRCLTTSGEDVIFIEVIHRILKAWRLHNKESERWQLIWEVVMPSFISDVNCFPLAMNPFDTYIVYLWDRQHGCLVSGYLQAQEFIVHQESENGSSSEGDCCRVNTSGTEGYMEERCDGVLMLSQFVLPSWMDSVPRPPN</sequence>